<sequence length="208" mass="22946">MADLSAQDKLKQICDALREETLKPAEEEAGSIVHNAREQAKRIVEEAKEEAQRIIRSAEETADQTLKKGEAALVQAGKRSLENLKQAVETKIFRESLGEWLDHVATDPEVSAKLVQALVQAVDAQGISGNLSAYIGKHVSARAVNEALGKEITSKLKEKGVSVGKFSGGAQLKVEERNWVLDMSSEVLLDLLTRFLQKDFREMIFQSC</sequence>
<keyword id="KW-0066">ATP synthesis</keyword>
<keyword id="KW-0375">Hydrogen ion transport</keyword>
<keyword id="KW-0406">Ion transport</keyword>
<keyword id="KW-0813">Transport</keyword>
<feature type="chain" id="PRO_1000115672" description="V-type proton ATPase subunit E">
    <location>
        <begin position="1"/>
        <end position="208"/>
    </location>
</feature>
<organism>
    <name type="scientific">Chlamydia trachomatis serovar L2b (strain UCH-1/proctitis)</name>
    <dbReference type="NCBI Taxonomy" id="471473"/>
    <lineage>
        <taxon>Bacteria</taxon>
        <taxon>Pseudomonadati</taxon>
        <taxon>Chlamydiota</taxon>
        <taxon>Chlamydiia</taxon>
        <taxon>Chlamydiales</taxon>
        <taxon>Chlamydiaceae</taxon>
        <taxon>Chlamydia/Chlamydophila group</taxon>
        <taxon>Chlamydia</taxon>
    </lineage>
</organism>
<proteinExistence type="inferred from homology"/>
<reference key="1">
    <citation type="journal article" date="2008" name="Genome Res.">
        <title>Chlamydia trachomatis: genome sequence analysis of lymphogranuloma venereum isolates.</title>
        <authorList>
            <person name="Thomson N.R."/>
            <person name="Holden M.T.G."/>
            <person name="Carder C."/>
            <person name="Lennard N."/>
            <person name="Lockey S.J."/>
            <person name="Marsh P."/>
            <person name="Skipp P."/>
            <person name="O'Connor C.D."/>
            <person name="Goodhead I."/>
            <person name="Norbertzcak H."/>
            <person name="Harris B."/>
            <person name="Ormond D."/>
            <person name="Rance R."/>
            <person name="Quail M.A."/>
            <person name="Parkhill J."/>
            <person name="Stephens R.S."/>
            <person name="Clarke I.N."/>
        </authorList>
    </citation>
    <scope>NUCLEOTIDE SEQUENCE [LARGE SCALE GENOMIC DNA]</scope>
    <source>
        <strain>UCH-1/proctitis</strain>
    </source>
</reference>
<protein>
    <recommendedName>
        <fullName evidence="1">V-type proton ATPase subunit E</fullName>
    </recommendedName>
    <alternativeName>
        <fullName evidence="1">V-ATPase subunit E</fullName>
    </alternativeName>
</protein>
<comment type="function">
    <text evidence="1">Produces ATP from ADP in the presence of a proton gradient across the membrane.</text>
</comment>
<comment type="similarity">
    <text evidence="1">Belongs to the V-ATPase E subunit family.</text>
</comment>
<gene>
    <name evidence="1" type="primary">atpE</name>
    <name type="ordered locus">CTLon_0558</name>
</gene>
<dbReference type="EMBL" id="AM884177">
    <property type="protein sequence ID" value="CAP06956.1"/>
    <property type="molecule type" value="Genomic_DNA"/>
</dbReference>
<dbReference type="RefSeq" id="WP_009873715.1">
    <property type="nucleotide sequence ID" value="NC_010280.2"/>
</dbReference>
<dbReference type="SMR" id="B0BBU1"/>
<dbReference type="KEGG" id="ctl:CTLon_0558"/>
<dbReference type="HOGENOM" id="CLU_1314973_0_0_0"/>
<dbReference type="Proteomes" id="UP001154401">
    <property type="component" value="Chromosome"/>
</dbReference>
<dbReference type="GO" id="GO:0033178">
    <property type="term" value="C:proton-transporting two-sector ATPase complex, catalytic domain"/>
    <property type="evidence" value="ECO:0007669"/>
    <property type="project" value="InterPro"/>
</dbReference>
<dbReference type="GO" id="GO:0005524">
    <property type="term" value="F:ATP binding"/>
    <property type="evidence" value="ECO:0007669"/>
    <property type="project" value="UniProtKB-UniRule"/>
</dbReference>
<dbReference type="GO" id="GO:0046933">
    <property type="term" value="F:proton-transporting ATP synthase activity, rotational mechanism"/>
    <property type="evidence" value="ECO:0007669"/>
    <property type="project" value="UniProtKB-UniRule"/>
</dbReference>
<dbReference type="GO" id="GO:0046961">
    <property type="term" value="F:proton-transporting ATPase activity, rotational mechanism"/>
    <property type="evidence" value="ECO:0007669"/>
    <property type="project" value="InterPro"/>
</dbReference>
<dbReference type="GO" id="GO:0042777">
    <property type="term" value="P:proton motive force-driven plasma membrane ATP synthesis"/>
    <property type="evidence" value="ECO:0007669"/>
    <property type="project" value="UniProtKB-UniRule"/>
</dbReference>
<dbReference type="Gene3D" id="1.20.5.2950">
    <property type="match status" value="1"/>
</dbReference>
<dbReference type="HAMAP" id="MF_00311">
    <property type="entry name" value="ATP_synth_E_arch"/>
    <property type="match status" value="1"/>
</dbReference>
<dbReference type="InterPro" id="IPR028987">
    <property type="entry name" value="ATP_synth_B-like_membr_sf"/>
</dbReference>
<dbReference type="InterPro" id="IPR002842">
    <property type="entry name" value="ATPase_V1_Esu"/>
</dbReference>
<dbReference type="InterPro" id="IPR009335">
    <property type="entry name" value="T3SS_HrpE/ATPase_suE"/>
</dbReference>
<dbReference type="NCBIfam" id="NF002170">
    <property type="entry name" value="PRK01005.1"/>
    <property type="match status" value="1"/>
</dbReference>
<dbReference type="Pfam" id="PF06188">
    <property type="entry name" value="HrpE"/>
    <property type="match status" value="1"/>
</dbReference>
<dbReference type="SUPFAM" id="SSF81573">
    <property type="entry name" value="F1F0 ATP synthase subunit B, membrane domain"/>
    <property type="match status" value="1"/>
</dbReference>
<evidence type="ECO:0000255" key="1">
    <source>
        <dbReference type="HAMAP-Rule" id="MF_00311"/>
    </source>
</evidence>
<accession>B0BBU1</accession>
<name>VATE_CHLTB</name>